<proteinExistence type="inferred from homology"/>
<comment type="function">
    <text evidence="1">Responsible for synthesis of pseudouridine from uracil-55 in the psi GC loop of transfer RNAs.</text>
</comment>
<comment type="catalytic activity">
    <reaction evidence="1">
        <text>uridine(55) in tRNA = pseudouridine(55) in tRNA</text>
        <dbReference type="Rhea" id="RHEA:42532"/>
        <dbReference type="Rhea" id="RHEA-COMP:10101"/>
        <dbReference type="Rhea" id="RHEA-COMP:10102"/>
        <dbReference type="ChEBI" id="CHEBI:65314"/>
        <dbReference type="ChEBI" id="CHEBI:65315"/>
        <dbReference type="EC" id="5.4.99.25"/>
    </reaction>
</comment>
<comment type="similarity">
    <text evidence="1">Belongs to the pseudouridine synthase TruB family. Type 1 subfamily.</text>
</comment>
<sequence length="227" mass="25765">MSAISKNIIIINKPIKWTSNDVVQKVKRVIGAKKVGHAGTLDPNASGVLVLGINEGTKLLTKLILDNKSYIAEIKFGTSTNTYDAAGEIVSSTNRMVTLTEVTKIVKDFYKNDYWQKPPQFSALKINGQKAYVLARQKVDFEIAPRLVKIFKYQIMDFNYEKQILKISLHVSKGFYVRSFAVDLATKINNLAHLLTLIRTQSGPFEIKDAIEIEQVYDYWNNINKYL</sequence>
<dbReference type="EC" id="5.4.99.25" evidence="1"/>
<dbReference type="EMBL" id="CP000942">
    <property type="protein sequence ID" value="ACA32964.1"/>
    <property type="molecule type" value="Genomic_DNA"/>
</dbReference>
<dbReference type="RefSeq" id="WP_006688525.1">
    <property type="nucleotide sequence ID" value="NC_010503.1"/>
</dbReference>
<dbReference type="SMR" id="B1AIZ3"/>
<dbReference type="GeneID" id="29672408"/>
<dbReference type="KEGG" id="upa:UPA3_0370"/>
<dbReference type="HOGENOM" id="CLU_032087_2_0_14"/>
<dbReference type="Proteomes" id="UP000002162">
    <property type="component" value="Chromosome"/>
</dbReference>
<dbReference type="GO" id="GO:0003723">
    <property type="term" value="F:RNA binding"/>
    <property type="evidence" value="ECO:0007669"/>
    <property type="project" value="InterPro"/>
</dbReference>
<dbReference type="GO" id="GO:0160148">
    <property type="term" value="F:tRNA pseudouridine(55) synthase activity"/>
    <property type="evidence" value="ECO:0007669"/>
    <property type="project" value="UniProtKB-EC"/>
</dbReference>
<dbReference type="GO" id="GO:1990481">
    <property type="term" value="P:mRNA pseudouridine synthesis"/>
    <property type="evidence" value="ECO:0007669"/>
    <property type="project" value="TreeGrafter"/>
</dbReference>
<dbReference type="GO" id="GO:0031119">
    <property type="term" value="P:tRNA pseudouridine synthesis"/>
    <property type="evidence" value="ECO:0007669"/>
    <property type="project" value="UniProtKB-UniRule"/>
</dbReference>
<dbReference type="Gene3D" id="3.30.2350.10">
    <property type="entry name" value="Pseudouridine synthase"/>
    <property type="match status" value="1"/>
</dbReference>
<dbReference type="HAMAP" id="MF_01080">
    <property type="entry name" value="TruB_bact"/>
    <property type="match status" value="1"/>
</dbReference>
<dbReference type="InterPro" id="IPR020103">
    <property type="entry name" value="PsdUridine_synth_cat_dom_sf"/>
</dbReference>
<dbReference type="InterPro" id="IPR002501">
    <property type="entry name" value="PsdUridine_synth_N"/>
</dbReference>
<dbReference type="InterPro" id="IPR014780">
    <property type="entry name" value="tRNA_psdUridine_synth_TruB"/>
</dbReference>
<dbReference type="NCBIfam" id="TIGR00431">
    <property type="entry name" value="TruB"/>
    <property type="match status" value="1"/>
</dbReference>
<dbReference type="PANTHER" id="PTHR13767:SF2">
    <property type="entry name" value="PSEUDOURIDYLATE SYNTHASE TRUB1"/>
    <property type="match status" value="1"/>
</dbReference>
<dbReference type="PANTHER" id="PTHR13767">
    <property type="entry name" value="TRNA-PSEUDOURIDINE SYNTHASE"/>
    <property type="match status" value="1"/>
</dbReference>
<dbReference type="Pfam" id="PF01509">
    <property type="entry name" value="TruB_N"/>
    <property type="match status" value="1"/>
</dbReference>
<dbReference type="SUPFAM" id="SSF55120">
    <property type="entry name" value="Pseudouridine synthase"/>
    <property type="match status" value="1"/>
</dbReference>
<evidence type="ECO:0000255" key="1">
    <source>
        <dbReference type="HAMAP-Rule" id="MF_01080"/>
    </source>
</evidence>
<name>TRUB_UREP2</name>
<gene>
    <name evidence="1" type="primary">truB</name>
    <name type="ordered locus">UPA3_0370</name>
</gene>
<feature type="chain" id="PRO_1000084711" description="tRNA pseudouridine synthase B">
    <location>
        <begin position="1"/>
        <end position="227"/>
    </location>
</feature>
<feature type="active site" description="Nucleophile" evidence="1">
    <location>
        <position position="42"/>
    </location>
</feature>
<accession>B1AIZ3</accession>
<protein>
    <recommendedName>
        <fullName evidence="1">tRNA pseudouridine synthase B</fullName>
        <ecNumber evidence="1">5.4.99.25</ecNumber>
    </recommendedName>
    <alternativeName>
        <fullName evidence="1">tRNA pseudouridine(55) synthase</fullName>
        <shortName evidence="1">Psi55 synthase</shortName>
    </alternativeName>
    <alternativeName>
        <fullName evidence="1">tRNA pseudouridylate synthase</fullName>
    </alternativeName>
    <alternativeName>
        <fullName evidence="1">tRNA-uridine isomerase</fullName>
    </alternativeName>
</protein>
<organism>
    <name type="scientific">Ureaplasma parvum serovar 3 (strain ATCC 27815 / 27 / NCTC 11736)</name>
    <dbReference type="NCBI Taxonomy" id="505682"/>
    <lineage>
        <taxon>Bacteria</taxon>
        <taxon>Bacillati</taxon>
        <taxon>Mycoplasmatota</taxon>
        <taxon>Mycoplasmoidales</taxon>
        <taxon>Mycoplasmoidaceae</taxon>
        <taxon>Ureaplasma</taxon>
    </lineage>
</organism>
<reference key="1">
    <citation type="submission" date="2008-02" db="EMBL/GenBank/DDBJ databases">
        <title>Genome sequence of Ureaplasma parvum serovar 3.</title>
        <authorList>
            <person name="Methe B.A."/>
            <person name="Glass J."/>
            <person name="Waites K."/>
            <person name="Shrivastava S."/>
        </authorList>
    </citation>
    <scope>NUCLEOTIDE SEQUENCE [LARGE SCALE GENOMIC DNA]</scope>
    <source>
        <strain>ATCC 27815 / 27 / NCTC 11736</strain>
    </source>
</reference>
<keyword id="KW-0413">Isomerase</keyword>
<keyword id="KW-0819">tRNA processing</keyword>